<accession>B7UZU1</accession>
<reference key="1">
    <citation type="journal article" date="2009" name="Genome Res.">
        <title>Newly introduced genomic prophage islands are critical determinants of in vivo competitiveness in the Liverpool epidemic strain of Pseudomonas aeruginosa.</title>
        <authorList>
            <person name="Winstanley C."/>
            <person name="Langille M.G.I."/>
            <person name="Fothergill J.L."/>
            <person name="Kukavica-Ibrulj I."/>
            <person name="Paradis-Bleau C."/>
            <person name="Sanschagrin F."/>
            <person name="Thomson N.R."/>
            <person name="Winsor G.L."/>
            <person name="Quail M.A."/>
            <person name="Lennard N."/>
            <person name="Bignell A."/>
            <person name="Clarke L."/>
            <person name="Seeger K."/>
            <person name="Saunders D."/>
            <person name="Harris D."/>
            <person name="Parkhill J."/>
            <person name="Hancock R.E.W."/>
            <person name="Brinkman F.S.L."/>
            <person name="Levesque R.C."/>
        </authorList>
    </citation>
    <scope>NUCLEOTIDE SEQUENCE [LARGE SCALE GENOMIC DNA]</scope>
    <source>
        <strain>LESB58</strain>
    </source>
</reference>
<proteinExistence type="inferred from homology"/>
<evidence type="ECO:0000255" key="1">
    <source>
        <dbReference type="HAMAP-Rule" id="MF_00429"/>
    </source>
</evidence>
<name>NQRE_PSEA8</name>
<comment type="function">
    <text evidence="1">NQR complex catalyzes the reduction of ubiquinone-1 to ubiquinol by two successive reactions, coupled with the transport of Na(+) ions from the cytoplasm to the periplasm. NqrA to NqrE are probably involved in the second step, the conversion of ubisemiquinone to ubiquinol.</text>
</comment>
<comment type="catalytic activity">
    <reaction evidence="1">
        <text>a ubiquinone + n Na(+)(in) + NADH + H(+) = a ubiquinol + n Na(+)(out) + NAD(+)</text>
        <dbReference type="Rhea" id="RHEA:47748"/>
        <dbReference type="Rhea" id="RHEA-COMP:9565"/>
        <dbReference type="Rhea" id="RHEA-COMP:9566"/>
        <dbReference type="ChEBI" id="CHEBI:15378"/>
        <dbReference type="ChEBI" id="CHEBI:16389"/>
        <dbReference type="ChEBI" id="CHEBI:17976"/>
        <dbReference type="ChEBI" id="CHEBI:29101"/>
        <dbReference type="ChEBI" id="CHEBI:57540"/>
        <dbReference type="ChEBI" id="CHEBI:57945"/>
        <dbReference type="EC" id="7.2.1.1"/>
    </reaction>
</comment>
<comment type="subunit">
    <text evidence="1">Composed of six subunits; NqrA, NqrB, NqrC, NqrD, NqrE and NqrF.</text>
</comment>
<comment type="subcellular location">
    <subcellularLocation>
        <location evidence="1">Cell inner membrane</location>
        <topology evidence="1">Multi-pass membrane protein</topology>
    </subcellularLocation>
</comment>
<comment type="similarity">
    <text evidence="1">Belongs to the NqrDE/RnfAE family.</text>
</comment>
<protein>
    <recommendedName>
        <fullName evidence="1">Na(+)-translocating NADH-quinone reductase subunit E</fullName>
        <shortName evidence="1">Na(+)-NQR subunit E</shortName>
        <shortName evidence="1">Na(+)-translocating NQR subunit E</shortName>
        <ecNumber evidence="1">7.2.1.1</ecNumber>
    </recommendedName>
    <alternativeName>
        <fullName evidence="1">NQR complex subunit E</fullName>
    </alternativeName>
    <alternativeName>
        <fullName evidence="1">NQR-1 subunit E</fullName>
    </alternativeName>
</protein>
<organism>
    <name type="scientific">Pseudomonas aeruginosa (strain LESB58)</name>
    <dbReference type="NCBI Taxonomy" id="557722"/>
    <lineage>
        <taxon>Bacteria</taxon>
        <taxon>Pseudomonadati</taxon>
        <taxon>Pseudomonadota</taxon>
        <taxon>Gammaproteobacteria</taxon>
        <taxon>Pseudomonadales</taxon>
        <taxon>Pseudomonadaceae</taxon>
        <taxon>Pseudomonas</taxon>
    </lineage>
</organism>
<feature type="chain" id="PRO_1000191704" description="Na(+)-translocating NADH-quinone reductase subunit E">
    <location>
        <begin position="1"/>
        <end position="202"/>
    </location>
</feature>
<feature type="transmembrane region" description="Helical" evidence="1">
    <location>
        <begin position="11"/>
        <end position="31"/>
    </location>
</feature>
<feature type="transmembrane region" description="Helical" evidence="1">
    <location>
        <begin position="35"/>
        <end position="55"/>
    </location>
</feature>
<feature type="transmembrane region" description="Helical" evidence="1">
    <location>
        <begin position="81"/>
        <end position="101"/>
    </location>
</feature>
<feature type="transmembrane region" description="Helical" evidence="1">
    <location>
        <begin position="114"/>
        <end position="134"/>
    </location>
</feature>
<feature type="transmembrane region" description="Helical" evidence="1">
    <location>
        <begin position="144"/>
        <end position="164"/>
    </location>
</feature>
<feature type="transmembrane region" description="Helical" evidence="1">
    <location>
        <begin position="180"/>
        <end position="200"/>
    </location>
</feature>
<gene>
    <name evidence="1" type="primary">nqrE</name>
    <name type="ordered locus">PLES_20671</name>
</gene>
<keyword id="KW-0997">Cell inner membrane</keyword>
<keyword id="KW-1003">Cell membrane</keyword>
<keyword id="KW-0406">Ion transport</keyword>
<keyword id="KW-0472">Membrane</keyword>
<keyword id="KW-0520">NAD</keyword>
<keyword id="KW-0915">Sodium</keyword>
<keyword id="KW-0739">Sodium transport</keyword>
<keyword id="KW-1278">Translocase</keyword>
<keyword id="KW-0812">Transmembrane</keyword>
<keyword id="KW-1133">Transmembrane helix</keyword>
<keyword id="KW-0813">Transport</keyword>
<keyword id="KW-0830">Ubiquinone</keyword>
<dbReference type="EC" id="7.2.1.1" evidence="1"/>
<dbReference type="EMBL" id="FM209186">
    <property type="protein sequence ID" value="CAW26794.1"/>
    <property type="molecule type" value="Genomic_DNA"/>
</dbReference>
<dbReference type="RefSeq" id="WP_003091182.1">
    <property type="nucleotide sequence ID" value="NC_011770.1"/>
</dbReference>
<dbReference type="SMR" id="B7UZU1"/>
<dbReference type="GeneID" id="77220513"/>
<dbReference type="KEGG" id="pag:PLES_20671"/>
<dbReference type="HOGENOM" id="CLU_095255_0_0_6"/>
<dbReference type="GO" id="GO:0009276">
    <property type="term" value="C:Gram-negative-bacterium-type cell wall"/>
    <property type="evidence" value="ECO:0007669"/>
    <property type="project" value="InterPro"/>
</dbReference>
<dbReference type="GO" id="GO:0005886">
    <property type="term" value="C:plasma membrane"/>
    <property type="evidence" value="ECO:0007669"/>
    <property type="project" value="UniProtKB-SubCell"/>
</dbReference>
<dbReference type="GO" id="GO:0016655">
    <property type="term" value="F:oxidoreductase activity, acting on NAD(P)H, quinone or similar compound as acceptor"/>
    <property type="evidence" value="ECO:0007669"/>
    <property type="project" value="UniProtKB-UniRule"/>
</dbReference>
<dbReference type="GO" id="GO:0022904">
    <property type="term" value="P:respiratory electron transport chain"/>
    <property type="evidence" value="ECO:0007669"/>
    <property type="project" value="InterPro"/>
</dbReference>
<dbReference type="GO" id="GO:0006814">
    <property type="term" value="P:sodium ion transport"/>
    <property type="evidence" value="ECO:0007669"/>
    <property type="project" value="UniProtKB-UniRule"/>
</dbReference>
<dbReference type="HAMAP" id="MF_00429">
    <property type="entry name" value="NqrE"/>
    <property type="match status" value="1"/>
</dbReference>
<dbReference type="InterPro" id="IPR003667">
    <property type="entry name" value="NqrDE/RnfAE"/>
</dbReference>
<dbReference type="InterPro" id="IPR050133">
    <property type="entry name" value="NqrDE/RnfAE_oxidrdctase"/>
</dbReference>
<dbReference type="InterPro" id="IPR010967">
    <property type="entry name" value="NqrE"/>
</dbReference>
<dbReference type="NCBIfam" id="TIGR01940">
    <property type="entry name" value="nqrE"/>
    <property type="match status" value="1"/>
</dbReference>
<dbReference type="PANTHER" id="PTHR30335">
    <property type="entry name" value="INTEGRAL MEMBRANE PROTEIN OF SOXR-REDUCING COMPLEX"/>
    <property type="match status" value="1"/>
</dbReference>
<dbReference type="PANTHER" id="PTHR30335:SF1">
    <property type="entry name" value="NA(+)-TRANSLOCATING NADH-QUINONE REDUCTASE SUBUNIT E"/>
    <property type="match status" value="1"/>
</dbReference>
<dbReference type="Pfam" id="PF02508">
    <property type="entry name" value="Rnf-Nqr"/>
    <property type="match status" value="1"/>
</dbReference>
<dbReference type="PIRSF" id="PIRSF006102">
    <property type="entry name" value="NQR_DE"/>
    <property type="match status" value="1"/>
</dbReference>
<sequence>MEHYISLFVKAVFVENMALAFFLGMCTFIAISKKVETAIGLGIAVIVVQTITVPANNLIYTYLLKDGALAWAGLPEVDLSFLGLLSYIGVIAAIVQILEMLLDKYVPSLYNALGVFLPLITVNCAIMAGSLFMVERDYNLAESTVYGVGSGFSWALAIAALAGIREKLKYSDVPEGLQGLGITFITIGLMSLGFMSFSGVQL</sequence>